<proteinExistence type="inferred from homology"/>
<keyword id="KW-1185">Reference proteome</keyword>
<keyword id="KW-0687">Ribonucleoprotein</keyword>
<keyword id="KW-0689">Ribosomal protein</keyword>
<keyword id="KW-0694">RNA-binding</keyword>
<keyword id="KW-0699">rRNA-binding</keyword>
<name>RL24_MYCA9</name>
<reference key="1">
    <citation type="journal article" date="2009" name="PLoS ONE">
        <title>Non mycobacterial virulence genes in the genome of the emerging pathogen Mycobacterium abscessus.</title>
        <authorList>
            <person name="Ripoll F."/>
            <person name="Pasek S."/>
            <person name="Schenowitz C."/>
            <person name="Dossat C."/>
            <person name="Barbe V."/>
            <person name="Rottman M."/>
            <person name="Macheras E."/>
            <person name="Heym B."/>
            <person name="Herrmann J.L."/>
            <person name="Daffe M."/>
            <person name="Brosch R."/>
            <person name="Risler J.L."/>
            <person name="Gaillard J.L."/>
        </authorList>
    </citation>
    <scope>NUCLEOTIDE SEQUENCE [LARGE SCALE GENOMIC DNA]</scope>
    <source>
        <strain>ATCC 19977 / DSM 44196 / CCUG 20993 / CIP 104536 / JCM 13569 / NCTC 13031 / TMC 1543 / L948</strain>
    </source>
</reference>
<gene>
    <name evidence="1" type="primary">rplX</name>
    <name type="ordered locus">MAB_3806c</name>
</gene>
<dbReference type="EMBL" id="CU458896">
    <property type="protein sequence ID" value="CAM63881.1"/>
    <property type="molecule type" value="Genomic_DNA"/>
</dbReference>
<dbReference type="RefSeq" id="WP_005055682.1">
    <property type="nucleotide sequence ID" value="NZ_MLCG01000001.1"/>
</dbReference>
<dbReference type="SMR" id="B1MGD6"/>
<dbReference type="GeneID" id="93380745"/>
<dbReference type="KEGG" id="mab:MAB_3806c"/>
<dbReference type="Proteomes" id="UP000007137">
    <property type="component" value="Chromosome"/>
</dbReference>
<dbReference type="GO" id="GO:1990904">
    <property type="term" value="C:ribonucleoprotein complex"/>
    <property type="evidence" value="ECO:0007669"/>
    <property type="project" value="UniProtKB-KW"/>
</dbReference>
<dbReference type="GO" id="GO:0005840">
    <property type="term" value="C:ribosome"/>
    <property type="evidence" value="ECO:0007669"/>
    <property type="project" value="UniProtKB-KW"/>
</dbReference>
<dbReference type="GO" id="GO:0019843">
    <property type="term" value="F:rRNA binding"/>
    <property type="evidence" value="ECO:0007669"/>
    <property type="project" value="UniProtKB-UniRule"/>
</dbReference>
<dbReference type="GO" id="GO:0003735">
    <property type="term" value="F:structural constituent of ribosome"/>
    <property type="evidence" value="ECO:0007669"/>
    <property type="project" value="InterPro"/>
</dbReference>
<dbReference type="GO" id="GO:0006412">
    <property type="term" value="P:translation"/>
    <property type="evidence" value="ECO:0007669"/>
    <property type="project" value="UniProtKB-UniRule"/>
</dbReference>
<dbReference type="CDD" id="cd06089">
    <property type="entry name" value="KOW_RPL26"/>
    <property type="match status" value="1"/>
</dbReference>
<dbReference type="FunFam" id="2.30.30.30:FF:000004">
    <property type="entry name" value="50S ribosomal protein L24"/>
    <property type="match status" value="1"/>
</dbReference>
<dbReference type="Gene3D" id="2.30.30.30">
    <property type="match status" value="1"/>
</dbReference>
<dbReference type="HAMAP" id="MF_01326_B">
    <property type="entry name" value="Ribosomal_uL24_B"/>
    <property type="match status" value="1"/>
</dbReference>
<dbReference type="InterPro" id="IPR005824">
    <property type="entry name" value="KOW"/>
</dbReference>
<dbReference type="InterPro" id="IPR014722">
    <property type="entry name" value="Rib_uL2_dom2"/>
</dbReference>
<dbReference type="InterPro" id="IPR003256">
    <property type="entry name" value="Ribosomal_uL24"/>
</dbReference>
<dbReference type="InterPro" id="IPR005825">
    <property type="entry name" value="Ribosomal_uL24_CS"/>
</dbReference>
<dbReference type="InterPro" id="IPR041988">
    <property type="entry name" value="Ribosomal_uL24_KOW"/>
</dbReference>
<dbReference type="InterPro" id="IPR008991">
    <property type="entry name" value="Translation_prot_SH3-like_sf"/>
</dbReference>
<dbReference type="NCBIfam" id="TIGR01079">
    <property type="entry name" value="rplX_bact"/>
    <property type="match status" value="1"/>
</dbReference>
<dbReference type="PANTHER" id="PTHR12903">
    <property type="entry name" value="MITOCHONDRIAL RIBOSOMAL PROTEIN L24"/>
    <property type="match status" value="1"/>
</dbReference>
<dbReference type="Pfam" id="PF00467">
    <property type="entry name" value="KOW"/>
    <property type="match status" value="1"/>
</dbReference>
<dbReference type="Pfam" id="PF17136">
    <property type="entry name" value="ribosomal_L24"/>
    <property type="match status" value="1"/>
</dbReference>
<dbReference type="SMART" id="SM00739">
    <property type="entry name" value="KOW"/>
    <property type="match status" value="1"/>
</dbReference>
<dbReference type="SUPFAM" id="SSF50104">
    <property type="entry name" value="Translation proteins SH3-like domain"/>
    <property type="match status" value="1"/>
</dbReference>
<dbReference type="PROSITE" id="PS01108">
    <property type="entry name" value="RIBOSOMAL_L24"/>
    <property type="match status" value="1"/>
</dbReference>
<comment type="function">
    <text evidence="1">One of two assembly initiator proteins, it binds directly to the 5'-end of the 23S rRNA, where it nucleates assembly of the 50S subunit.</text>
</comment>
<comment type="function">
    <text evidence="1">One of the proteins that surrounds the polypeptide exit tunnel on the outside of the subunit.</text>
</comment>
<comment type="subunit">
    <text evidence="1">Part of the 50S ribosomal subunit.</text>
</comment>
<comment type="similarity">
    <text evidence="1">Belongs to the universal ribosomal protein uL24 family.</text>
</comment>
<accession>B1MGD6</accession>
<protein>
    <recommendedName>
        <fullName evidence="1">Large ribosomal subunit protein uL24</fullName>
    </recommendedName>
    <alternativeName>
        <fullName evidence="3">50S ribosomal protein L24</fullName>
    </alternativeName>
</protein>
<organism>
    <name type="scientific">Mycobacteroides abscessus (strain ATCC 19977 / DSM 44196 / CCUG 20993 / CIP 104536 / JCM 13569 / NCTC 13031 / TMC 1543 / L948)</name>
    <name type="common">Mycobacterium abscessus</name>
    <dbReference type="NCBI Taxonomy" id="561007"/>
    <lineage>
        <taxon>Bacteria</taxon>
        <taxon>Bacillati</taxon>
        <taxon>Actinomycetota</taxon>
        <taxon>Actinomycetes</taxon>
        <taxon>Mycobacteriales</taxon>
        <taxon>Mycobacteriaceae</taxon>
        <taxon>Mycobacteroides</taxon>
        <taxon>Mycobacteroides abscessus</taxon>
    </lineage>
</organism>
<sequence>MKVHKGDTVLVIAGKDKGAKGKVIAAYPERSRVLVEGVNRIKKHTPQSANERGASSGGIVTQEAPIHVSNVMVIDSDGQPTRIGYRVDEETGKKVRISRRNGKDI</sequence>
<evidence type="ECO:0000255" key="1">
    <source>
        <dbReference type="HAMAP-Rule" id="MF_01326"/>
    </source>
</evidence>
<evidence type="ECO:0000256" key="2">
    <source>
        <dbReference type="SAM" id="MobiDB-lite"/>
    </source>
</evidence>
<evidence type="ECO:0000305" key="3"/>
<feature type="chain" id="PRO_1000142016" description="Large ribosomal subunit protein uL24">
    <location>
        <begin position="1"/>
        <end position="105"/>
    </location>
</feature>
<feature type="region of interest" description="Disordered" evidence="2">
    <location>
        <begin position="40"/>
        <end position="61"/>
    </location>
</feature>